<organism>
    <name type="scientific">Mesorhizobium japonicum (strain LMG 29417 / CECT 9101 / MAFF 303099)</name>
    <name type="common">Mesorhizobium loti (strain MAFF 303099)</name>
    <dbReference type="NCBI Taxonomy" id="266835"/>
    <lineage>
        <taxon>Bacteria</taxon>
        <taxon>Pseudomonadati</taxon>
        <taxon>Pseudomonadota</taxon>
        <taxon>Alphaproteobacteria</taxon>
        <taxon>Hyphomicrobiales</taxon>
        <taxon>Phyllobacteriaceae</taxon>
        <taxon>Mesorhizobium</taxon>
    </lineage>
</organism>
<protein>
    <recommendedName>
        <fullName evidence="1">2,3,4,5-tetrahydropyridine-2,6-dicarboxylate N-succinyltransferase</fullName>
        <ecNumber evidence="1">2.3.1.117</ecNumber>
    </recommendedName>
    <alternativeName>
        <fullName evidence="1">Tetrahydrodipicolinate N-succinyltransferase</fullName>
        <shortName evidence="1">THDP succinyltransferase</shortName>
        <shortName evidence="1">THP succinyltransferase</shortName>
        <shortName evidence="1">Tetrahydropicolinate succinylase</shortName>
    </alternativeName>
</protein>
<name>DAPD_RHILO</name>
<evidence type="ECO:0000255" key="1">
    <source>
        <dbReference type="HAMAP-Rule" id="MF_00811"/>
    </source>
</evidence>
<keyword id="KW-0012">Acyltransferase</keyword>
<keyword id="KW-0028">Amino-acid biosynthesis</keyword>
<keyword id="KW-0963">Cytoplasm</keyword>
<keyword id="KW-0220">Diaminopimelate biosynthesis</keyword>
<keyword id="KW-0457">Lysine biosynthesis</keyword>
<keyword id="KW-0677">Repeat</keyword>
<keyword id="KW-0808">Transferase</keyword>
<reference key="1">
    <citation type="journal article" date="2000" name="DNA Res.">
        <title>Complete genome structure of the nitrogen-fixing symbiotic bacterium Mesorhizobium loti.</title>
        <authorList>
            <person name="Kaneko T."/>
            <person name="Nakamura Y."/>
            <person name="Sato S."/>
            <person name="Asamizu E."/>
            <person name="Kato T."/>
            <person name="Sasamoto S."/>
            <person name="Watanabe A."/>
            <person name="Idesawa K."/>
            <person name="Ishikawa A."/>
            <person name="Kawashima K."/>
            <person name="Kimura T."/>
            <person name="Kishida Y."/>
            <person name="Kiyokawa C."/>
            <person name="Kohara M."/>
            <person name="Matsumoto M."/>
            <person name="Matsuno A."/>
            <person name="Mochizuki Y."/>
            <person name="Nakayama S."/>
            <person name="Nakazaki N."/>
            <person name="Shimpo S."/>
            <person name="Sugimoto M."/>
            <person name="Takeuchi C."/>
            <person name="Yamada M."/>
            <person name="Tabata S."/>
        </authorList>
    </citation>
    <scope>NUCLEOTIDE SEQUENCE [LARGE SCALE GENOMIC DNA]</scope>
    <source>
        <strain>LMG 29417 / CECT 9101 / MAFF 303099</strain>
    </source>
</reference>
<sequence length="284" mass="30361">MSKPDLASLEKTIEKAFDERDAISTATRGETRDAIQAALDLLDRGTVRVAERQADGKWHVNQWLKKAVLLSFRLNPMEIIKGGPGQAVWWDKVPSKFDGWSAVDFEKAGFRAVPSSIVRRSAYVAPGAVLMPSFVNVGAYVDTGTMVDTWASVGSCAQIGKNVHLSGGVGIGGVLEPMQAGPTIIEDNCFIGARSEVVEGCIVREGSVLGMGVFIGQSTKIVDRATGEIFYGEVPPNSVVVAGSLPGKPFPNNEPGPGLYCAVIVKRVDAKTRSKTSINELLRD</sequence>
<feature type="chain" id="PRO_0000196959" description="2,3,4,5-tetrahydropyridine-2,6-dicarboxylate N-succinyltransferase">
    <location>
        <begin position="1"/>
        <end position="284"/>
    </location>
</feature>
<feature type="binding site" evidence="1">
    <location>
        <position position="111"/>
    </location>
    <ligand>
        <name>substrate</name>
    </ligand>
</feature>
<feature type="binding site" evidence="1">
    <location>
        <position position="148"/>
    </location>
    <ligand>
        <name>substrate</name>
    </ligand>
</feature>
<gene>
    <name evidence="1" type="primary">dapD</name>
    <name type="ordered locus">mlr4843</name>
</gene>
<proteinExistence type="inferred from homology"/>
<accession>Q98D61</accession>
<dbReference type="EC" id="2.3.1.117" evidence="1"/>
<dbReference type="EMBL" id="BA000012">
    <property type="protein sequence ID" value="BAB51410.1"/>
    <property type="molecule type" value="Genomic_DNA"/>
</dbReference>
<dbReference type="RefSeq" id="WP_010912751.1">
    <property type="nucleotide sequence ID" value="NC_002678.2"/>
</dbReference>
<dbReference type="SMR" id="Q98D61"/>
<dbReference type="KEGG" id="mlo:mlr4843"/>
<dbReference type="PATRIC" id="fig|266835.9.peg.3826"/>
<dbReference type="eggNOG" id="COG2171">
    <property type="taxonomic scope" value="Bacteria"/>
</dbReference>
<dbReference type="HOGENOM" id="CLU_050859_0_1_5"/>
<dbReference type="UniPathway" id="UPA00034">
    <property type="reaction ID" value="UER00019"/>
</dbReference>
<dbReference type="Proteomes" id="UP000000552">
    <property type="component" value="Chromosome"/>
</dbReference>
<dbReference type="GO" id="GO:0005737">
    <property type="term" value="C:cytoplasm"/>
    <property type="evidence" value="ECO:0007669"/>
    <property type="project" value="UniProtKB-SubCell"/>
</dbReference>
<dbReference type="GO" id="GO:0008666">
    <property type="term" value="F:2,3,4,5-tetrahydropyridine-2,6-dicarboxylate N-succinyltransferase activity"/>
    <property type="evidence" value="ECO:0007669"/>
    <property type="project" value="UniProtKB-UniRule"/>
</dbReference>
<dbReference type="GO" id="GO:0016779">
    <property type="term" value="F:nucleotidyltransferase activity"/>
    <property type="evidence" value="ECO:0007669"/>
    <property type="project" value="TreeGrafter"/>
</dbReference>
<dbReference type="GO" id="GO:0019877">
    <property type="term" value="P:diaminopimelate biosynthetic process"/>
    <property type="evidence" value="ECO:0007669"/>
    <property type="project" value="UniProtKB-UniRule"/>
</dbReference>
<dbReference type="GO" id="GO:0009089">
    <property type="term" value="P:lysine biosynthetic process via diaminopimelate"/>
    <property type="evidence" value="ECO:0007669"/>
    <property type="project" value="UniProtKB-UniRule"/>
</dbReference>
<dbReference type="CDD" id="cd03350">
    <property type="entry name" value="LbH_THP_succinylT"/>
    <property type="match status" value="1"/>
</dbReference>
<dbReference type="Gene3D" id="2.160.10.10">
    <property type="entry name" value="Hexapeptide repeat proteins"/>
    <property type="match status" value="1"/>
</dbReference>
<dbReference type="Gene3D" id="1.10.166.10">
    <property type="entry name" value="Tetrahydrodipicolinate-N-succinyltransferase, N-terminal domain"/>
    <property type="match status" value="1"/>
</dbReference>
<dbReference type="HAMAP" id="MF_00811">
    <property type="entry name" value="DapD"/>
    <property type="match status" value="1"/>
</dbReference>
<dbReference type="InterPro" id="IPR005664">
    <property type="entry name" value="DapD_Trfase_Hexpep_rpt_fam"/>
</dbReference>
<dbReference type="InterPro" id="IPR001451">
    <property type="entry name" value="Hexapep"/>
</dbReference>
<dbReference type="InterPro" id="IPR018357">
    <property type="entry name" value="Hexapep_transf_CS"/>
</dbReference>
<dbReference type="InterPro" id="IPR023180">
    <property type="entry name" value="THP_succinylTrfase_dom1"/>
</dbReference>
<dbReference type="InterPro" id="IPR037133">
    <property type="entry name" value="THP_succinylTrfase_N_sf"/>
</dbReference>
<dbReference type="InterPro" id="IPR011004">
    <property type="entry name" value="Trimer_LpxA-like_sf"/>
</dbReference>
<dbReference type="NCBIfam" id="TIGR00965">
    <property type="entry name" value="dapD"/>
    <property type="match status" value="1"/>
</dbReference>
<dbReference type="NCBIfam" id="NF008808">
    <property type="entry name" value="PRK11830.1"/>
    <property type="match status" value="1"/>
</dbReference>
<dbReference type="PANTHER" id="PTHR19136:SF52">
    <property type="entry name" value="2,3,4,5-TETRAHYDROPYRIDINE-2,6-DICARBOXYLATE N-SUCCINYLTRANSFERASE"/>
    <property type="match status" value="1"/>
</dbReference>
<dbReference type="PANTHER" id="PTHR19136">
    <property type="entry name" value="MOLYBDENUM COFACTOR GUANYLYLTRANSFERASE"/>
    <property type="match status" value="1"/>
</dbReference>
<dbReference type="Pfam" id="PF14602">
    <property type="entry name" value="Hexapep_2"/>
    <property type="match status" value="1"/>
</dbReference>
<dbReference type="Pfam" id="PF14805">
    <property type="entry name" value="THDPS_N_2"/>
    <property type="match status" value="1"/>
</dbReference>
<dbReference type="SUPFAM" id="SSF51161">
    <property type="entry name" value="Trimeric LpxA-like enzymes"/>
    <property type="match status" value="1"/>
</dbReference>
<dbReference type="PROSITE" id="PS00101">
    <property type="entry name" value="HEXAPEP_TRANSFERASES"/>
    <property type="match status" value="1"/>
</dbReference>
<comment type="catalytic activity">
    <reaction evidence="1">
        <text>(S)-2,3,4,5-tetrahydrodipicolinate + succinyl-CoA + H2O = (S)-2-succinylamino-6-oxoheptanedioate + CoA</text>
        <dbReference type="Rhea" id="RHEA:17325"/>
        <dbReference type="ChEBI" id="CHEBI:15377"/>
        <dbReference type="ChEBI" id="CHEBI:15685"/>
        <dbReference type="ChEBI" id="CHEBI:16845"/>
        <dbReference type="ChEBI" id="CHEBI:57287"/>
        <dbReference type="ChEBI" id="CHEBI:57292"/>
        <dbReference type="EC" id="2.3.1.117"/>
    </reaction>
</comment>
<comment type="pathway">
    <text evidence="1">Amino-acid biosynthesis; L-lysine biosynthesis via DAP pathway; LL-2,6-diaminopimelate from (S)-tetrahydrodipicolinate (succinylase route): step 1/3.</text>
</comment>
<comment type="subunit">
    <text evidence="1">Homotrimer.</text>
</comment>
<comment type="subcellular location">
    <subcellularLocation>
        <location evidence="1">Cytoplasm</location>
    </subcellularLocation>
</comment>
<comment type="similarity">
    <text evidence="1">Belongs to the transferase hexapeptide repeat family.</text>
</comment>